<organism>
    <name type="scientific">Corynebacterium jeikeium (strain K411)</name>
    <dbReference type="NCBI Taxonomy" id="306537"/>
    <lineage>
        <taxon>Bacteria</taxon>
        <taxon>Bacillati</taxon>
        <taxon>Actinomycetota</taxon>
        <taxon>Actinomycetes</taxon>
        <taxon>Mycobacteriales</taxon>
        <taxon>Corynebacteriaceae</taxon>
        <taxon>Corynebacterium</taxon>
    </lineage>
</organism>
<gene>
    <name evidence="1" type="primary">atpC</name>
    <name type="ordered locus">jk1334</name>
</gene>
<protein>
    <recommendedName>
        <fullName evidence="1">ATP synthase epsilon chain</fullName>
    </recommendedName>
    <alternativeName>
        <fullName evidence="1">ATP synthase F1 sector epsilon subunit</fullName>
    </alternativeName>
    <alternativeName>
        <fullName evidence="1">F-ATPase epsilon subunit</fullName>
    </alternativeName>
</protein>
<reference key="1">
    <citation type="journal article" date="2005" name="J. Bacteriol.">
        <title>Complete genome sequence and analysis of the multiresistant nosocomial pathogen Corynebacterium jeikeium K411, a lipid-requiring bacterium of the human skin flora.</title>
        <authorList>
            <person name="Tauch A."/>
            <person name="Kaiser O."/>
            <person name="Hain T."/>
            <person name="Goesmann A."/>
            <person name="Weisshaar B."/>
            <person name="Albersmeier A."/>
            <person name="Bekel T."/>
            <person name="Bischoff N."/>
            <person name="Brune I."/>
            <person name="Chakraborty T."/>
            <person name="Kalinowski J."/>
            <person name="Meyer F."/>
            <person name="Rupp O."/>
            <person name="Schneiker S."/>
            <person name="Viehoever P."/>
            <person name="Puehler A."/>
        </authorList>
    </citation>
    <scope>NUCLEOTIDE SEQUENCE [LARGE SCALE GENOMIC DNA]</scope>
    <source>
        <strain>K411</strain>
    </source>
</reference>
<name>ATPE_CORJK</name>
<sequence>MAEIAAQLVSVERPLWVGTATSVTAQTTEGEIGVLPGHEPLLGQLVENGVVTIRTNTGEKLVAAVQGGFLSVSSEKITILADSATWASEVNVADAESRKQSAETEHDKAVAESELRAVKRMEA</sequence>
<feature type="chain" id="PRO_0000265804" description="ATP synthase epsilon chain">
    <location>
        <begin position="1"/>
        <end position="123"/>
    </location>
</feature>
<feature type="region of interest" description="Disordered" evidence="2">
    <location>
        <begin position="96"/>
        <end position="123"/>
    </location>
</feature>
<comment type="function">
    <text evidence="1">Produces ATP from ADP in the presence of a proton gradient across the membrane.</text>
</comment>
<comment type="subunit">
    <text>F-type ATPases have 2 components, CF(1) - the catalytic core - and CF(0) - the membrane proton channel. CF(1) has five subunits: alpha(3), beta(3), gamma(1), delta(1), epsilon(1). CF(0) has three main subunits: a, b and c.</text>
</comment>
<comment type="subcellular location">
    <subcellularLocation>
        <location evidence="1">Cell membrane</location>
        <topology evidence="1">Peripheral membrane protein</topology>
    </subcellularLocation>
</comment>
<comment type="similarity">
    <text evidence="1">Belongs to the ATPase epsilon chain family.</text>
</comment>
<evidence type="ECO:0000255" key="1">
    <source>
        <dbReference type="HAMAP-Rule" id="MF_00530"/>
    </source>
</evidence>
<evidence type="ECO:0000256" key="2">
    <source>
        <dbReference type="SAM" id="MobiDB-lite"/>
    </source>
</evidence>
<accession>Q4JUK1</accession>
<dbReference type="EMBL" id="CR931997">
    <property type="protein sequence ID" value="CAI37506.1"/>
    <property type="molecule type" value="Genomic_DNA"/>
</dbReference>
<dbReference type="RefSeq" id="WP_005292970.1">
    <property type="nucleotide sequence ID" value="NC_007164.1"/>
</dbReference>
<dbReference type="SMR" id="Q4JUK1"/>
<dbReference type="STRING" id="306537.jk1334"/>
<dbReference type="GeneID" id="92738915"/>
<dbReference type="KEGG" id="cjk:jk1334"/>
<dbReference type="eggNOG" id="COG0355">
    <property type="taxonomic scope" value="Bacteria"/>
</dbReference>
<dbReference type="HOGENOM" id="CLU_084338_4_0_11"/>
<dbReference type="OrthoDB" id="9791445at2"/>
<dbReference type="Proteomes" id="UP000000545">
    <property type="component" value="Chromosome"/>
</dbReference>
<dbReference type="GO" id="GO:0005886">
    <property type="term" value="C:plasma membrane"/>
    <property type="evidence" value="ECO:0007669"/>
    <property type="project" value="UniProtKB-SubCell"/>
</dbReference>
<dbReference type="GO" id="GO:0045259">
    <property type="term" value="C:proton-transporting ATP synthase complex"/>
    <property type="evidence" value="ECO:0007669"/>
    <property type="project" value="UniProtKB-KW"/>
</dbReference>
<dbReference type="GO" id="GO:0005524">
    <property type="term" value="F:ATP binding"/>
    <property type="evidence" value="ECO:0007669"/>
    <property type="project" value="UniProtKB-UniRule"/>
</dbReference>
<dbReference type="GO" id="GO:0046933">
    <property type="term" value="F:proton-transporting ATP synthase activity, rotational mechanism"/>
    <property type="evidence" value="ECO:0007669"/>
    <property type="project" value="UniProtKB-UniRule"/>
</dbReference>
<dbReference type="CDD" id="cd12152">
    <property type="entry name" value="F1-ATPase_delta"/>
    <property type="match status" value="1"/>
</dbReference>
<dbReference type="Gene3D" id="2.60.15.10">
    <property type="entry name" value="F0F1 ATP synthase delta/epsilon subunit, N-terminal"/>
    <property type="match status" value="1"/>
</dbReference>
<dbReference type="HAMAP" id="MF_00530">
    <property type="entry name" value="ATP_synth_epsil_bac"/>
    <property type="match status" value="1"/>
</dbReference>
<dbReference type="InterPro" id="IPR001469">
    <property type="entry name" value="ATP_synth_F1_dsu/esu"/>
</dbReference>
<dbReference type="InterPro" id="IPR020546">
    <property type="entry name" value="ATP_synth_F1_dsu/esu_N"/>
</dbReference>
<dbReference type="InterPro" id="IPR036771">
    <property type="entry name" value="ATPsynth_dsu/esu_N"/>
</dbReference>
<dbReference type="NCBIfam" id="TIGR01216">
    <property type="entry name" value="ATP_synt_epsi"/>
    <property type="match status" value="1"/>
</dbReference>
<dbReference type="NCBIfam" id="NF001852">
    <property type="entry name" value="PRK00571.2-5"/>
    <property type="match status" value="1"/>
</dbReference>
<dbReference type="NCBIfam" id="NF009977">
    <property type="entry name" value="PRK13442.1"/>
    <property type="match status" value="1"/>
</dbReference>
<dbReference type="PANTHER" id="PTHR13822">
    <property type="entry name" value="ATP SYNTHASE DELTA/EPSILON CHAIN"/>
    <property type="match status" value="1"/>
</dbReference>
<dbReference type="PANTHER" id="PTHR13822:SF10">
    <property type="entry name" value="ATP SYNTHASE EPSILON CHAIN, CHLOROPLASTIC"/>
    <property type="match status" value="1"/>
</dbReference>
<dbReference type="Pfam" id="PF02823">
    <property type="entry name" value="ATP-synt_DE_N"/>
    <property type="match status" value="1"/>
</dbReference>
<dbReference type="SUPFAM" id="SSF51344">
    <property type="entry name" value="Epsilon subunit of F1F0-ATP synthase N-terminal domain"/>
    <property type="match status" value="1"/>
</dbReference>
<keyword id="KW-0066">ATP synthesis</keyword>
<keyword id="KW-1003">Cell membrane</keyword>
<keyword id="KW-0139">CF(1)</keyword>
<keyword id="KW-0375">Hydrogen ion transport</keyword>
<keyword id="KW-0406">Ion transport</keyword>
<keyword id="KW-0472">Membrane</keyword>
<keyword id="KW-1185">Reference proteome</keyword>
<keyword id="KW-0813">Transport</keyword>
<proteinExistence type="inferred from homology"/>